<name>TSOXD_CORS1</name>
<evidence type="ECO:0000250" key="1">
    <source>
        <dbReference type="UniProtKB" id="Q50LF1"/>
    </source>
</evidence>
<evidence type="ECO:0000269" key="2">
    <source>
    </source>
</evidence>
<evidence type="ECO:0000269" key="3">
    <source>
    </source>
</evidence>
<evidence type="ECO:0000269" key="4">
    <source>
    </source>
</evidence>
<evidence type="ECO:0000269" key="5">
    <source>
    </source>
</evidence>
<evidence type="ECO:0000269" key="6">
    <source>
    </source>
</evidence>
<evidence type="ECO:0000303" key="7">
    <source>
    </source>
</evidence>
<evidence type="ECO:0000305" key="8"/>
<evidence type="ECO:0000305" key="9">
    <source>
    </source>
</evidence>
<feature type="chain" id="PRO_0000072049" description="Sarcosine oxidase subunit delta">
    <location>
        <begin position="1"/>
        <end position="98"/>
    </location>
</feature>
<feature type="binding site" evidence="1">
    <location>
        <position position="6"/>
    </location>
    <ligand>
        <name>Zn(2+)</name>
        <dbReference type="ChEBI" id="CHEBI:29105"/>
    </ligand>
</feature>
<feature type="binding site" evidence="1">
    <location>
        <position position="9"/>
    </location>
    <ligand>
        <name>Zn(2+)</name>
        <dbReference type="ChEBI" id="CHEBI:29105"/>
    </ligand>
</feature>
<feature type="binding site" evidence="1">
    <location>
        <position position="59"/>
    </location>
    <ligand>
        <name>Zn(2+)</name>
        <dbReference type="ChEBI" id="CHEBI:29105"/>
    </ligand>
</feature>
<feature type="binding site" evidence="1">
    <location>
        <position position="63"/>
    </location>
    <ligand>
        <name>Zn(2+)</name>
        <dbReference type="ChEBI" id="CHEBI:29105"/>
    </ligand>
</feature>
<comment type="function">
    <text evidence="2 3 5 6">In the presence of tetrahydrofolate, catalyzes the oxidative demethylation of sarcosine to yield glycine, 5,10-methylenetetrahydrofolate and hydrogen peroxide (PubMed:11330998, PubMed:3427080, PubMed:9185627). In the absence of tetrahydrofolate, catalyzes the oxidative demethylation of sarcosine to yield glycine, formaldehyde and hydrogen peroxide (PubMed:11330998, PubMed:7692961, PubMed:9185627).</text>
</comment>
<comment type="catalytic activity">
    <reaction evidence="3 6 9">
        <text>sarcosine + (6S)-5,6,7,8-tetrahydrofolate + O2 = (6R)-5,10-methylene-5,6,7,8-tetrahydrofolate + glycine + H2O2</text>
        <dbReference type="Rhea" id="RHEA:70455"/>
        <dbReference type="ChEBI" id="CHEBI:15379"/>
        <dbReference type="ChEBI" id="CHEBI:15636"/>
        <dbReference type="ChEBI" id="CHEBI:16240"/>
        <dbReference type="ChEBI" id="CHEBI:57305"/>
        <dbReference type="ChEBI" id="CHEBI:57433"/>
        <dbReference type="ChEBI" id="CHEBI:57453"/>
        <dbReference type="EC" id="1.5.3.24"/>
    </reaction>
</comment>
<comment type="catalytic activity">
    <reaction evidence="2 5 6">
        <text>sarcosine + O2 + H2O = formaldehyde + glycine + H2O2</text>
        <dbReference type="Rhea" id="RHEA:13313"/>
        <dbReference type="ChEBI" id="CHEBI:15377"/>
        <dbReference type="ChEBI" id="CHEBI:15379"/>
        <dbReference type="ChEBI" id="CHEBI:16240"/>
        <dbReference type="ChEBI" id="CHEBI:16842"/>
        <dbReference type="ChEBI" id="CHEBI:57305"/>
        <dbReference type="ChEBI" id="CHEBI:57433"/>
    </reaction>
</comment>
<comment type="subunit">
    <text evidence="2 4 5">Heterotetramer composed of subunits alpha (SoxA), beta (SoxB), gamma (SoxG) and delta (SoxD).</text>
</comment>
<comment type="subcellular location">
    <subcellularLocation>
        <location evidence="5">Cytoplasm</location>
    </subcellularLocation>
</comment>
<comment type="miscellaneous">
    <text evidence="6">Utilization of tetrahydrofolate is probably the physiological reaction since the products are substrates for serine hydroxymethyltransferase, an enzyme which is part of the sarcosine oxidase operon.</text>
</comment>
<comment type="similarity">
    <text evidence="8">Belongs to the SoxD family.</text>
</comment>
<protein>
    <recommendedName>
        <fullName evidence="8">Sarcosine oxidase subunit delta</fullName>
        <shortName evidence="8">Sarcosine oxidase subunit D</shortName>
        <ecNumber evidence="3 6 9">1.5.3.24</ecNumber>
    </recommendedName>
    <alternativeName>
        <fullName evidence="8">Sarcosine oxidase (5,10-methylenetetrahydrofolate-forming) subunit delta</fullName>
    </alternativeName>
    <alternativeName>
        <fullName evidence="8">Tetrameric sarcosine oxidase subunit delta</fullName>
        <shortName evidence="8">TSOX subunit delta</shortName>
    </alternativeName>
</protein>
<accession>Q46336</accession>
<dbReference type="EC" id="1.5.3.24" evidence="3 6 9"/>
<dbReference type="EMBL" id="U23955">
    <property type="protein sequence ID" value="AAC43460.1"/>
    <property type="molecule type" value="Genomic_DNA"/>
</dbReference>
<dbReference type="SMR" id="Q46336"/>
<dbReference type="KEGG" id="ag:AAC43460"/>
<dbReference type="BioCyc" id="MetaCyc:MONOMER-8524"/>
<dbReference type="GO" id="GO:0005737">
    <property type="term" value="C:cytoplasm"/>
    <property type="evidence" value="ECO:0007669"/>
    <property type="project" value="UniProtKB-SubCell"/>
</dbReference>
<dbReference type="GO" id="GO:0046872">
    <property type="term" value="F:metal ion binding"/>
    <property type="evidence" value="ECO:0007669"/>
    <property type="project" value="UniProtKB-KW"/>
</dbReference>
<dbReference type="GO" id="GO:0008115">
    <property type="term" value="F:sarcosine oxidase activity"/>
    <property type="evidence" value="ECO:0007669"/>
    <property type="project" value="UniProtKB-EC"/>
</dbReference>
<dbReference type="GO" id="GO:0046653">
    <property type="term" value="P:tetrahydrofolate metabolic process"/>
    <property type="evidence" value="ECO:0007669"/>
    <property type="project" value="InterPro"/>
</dbReference>
<dbReference type="Gene3D" id="3.30.2270.10">
    <property type="entry name" value="Folate-binding superfamily"/>
    <property type="match status" value="1"/>
</dbReference>
<dbReference type="InterPro" id="IPR006279">
    <property type="entry name" value="SoxD"/>
</dbReference>
<dbReference type="InterPro" id="IPR038561">
    <property type="entry name" value="SoxD_sf"/>
</dbReference>
<dbReference type="NCBIfam" id="TIGR01374">
    <property type="entry name" value="soxD"/>
    <property type="match status" value="1"/>
</dbReference>
<dbReference type="Pfam" id="PF04267">
    <property type="entry name" value="SoxD"/>
    <property type="match status" value="1"/>
</dbReference>
<sequence length="98" mass="11315">MMLIECPNCGPRNETEFSYGGQAHVAYPEDPNALSDKEWSRYLFYRENSKGIFAERWVHSGGCRKWFNALRDTATYEFKAVYRAGEPRPELNTQGGSR</sequence>
<organism>
    <name type="scientific">Corynebacterium sp. (strain P-1)</name>
    <dbReference type="NCBI Taxonomy" id="69006"/>
    <lineage>
        <taxon>Bacteria</taxon>
        <taxon>Bacillati</taxon>
        <taxon>Actinomycetota</taxon>
        <taxon>Actinomycetes</taxon>
        <taxon>Mycobacteriales</taxon>
        <taxon>Corynebacteriaceae</taxon>
        <taxon>Corynebacterium</taxon>
    </lineage>
</organism>
<proteinExistence type="evidence at protein level"/>
<reference key="1">
    <citation type="journal article" date="1995" name="J. Biol. Chem.">
        <title>Sequence analysis of sarcosine oxidase and nearby genes reveals homologies with key enzymes of folate one-carbon metabolism.</title>
        <authorList>
            <person name="Chlumsky L.J."/>
            <person name="Zhang L."/>
            <person name="Jorns M.S."/>
        </authorList>
    </citation>
    <scope>NUCLEOTIDE SEQUENCE [GENOMIC DNA]</scope>
    <scope>PROTEIN SEQUENCE OF 1-22</scope>
    <scope>SUBUNIT</scope>
    <scope>IDENTIFICATION BY MASS SPECTROMETRY</scope>
    <source>
        <strain>P-1</strain>
    </source>
</reference>
<reference key="2">
    <citation type="journal article" date="1987" name="Biochemistry">
        <title>Interaction of tetrahydrofolate and other folate derivatives with bacterial sarcosine oxidase.</title>
        <authorList>
            <person name="Kvalnes-Krick K."/>
            <person name="Jorns M.S."/>
        </authorList>
    </citation>
    <scope>FUNCTION</scope>
    <scope>CATALYTIC ACTIVITY</scope>
    <source>
        <strain>P-1</strain>
    </source>
</reference>
<reference key="3">
    <citation type="journal article" date="1993" name="Biochemistry">
        <title>Preparation and properties of recombinant corynebacterial sarcosine oxidase: evidence for posttranslational modification during turnover with sarcosine.</title>
        <authorList>
            <person name="Chlumsky L.J."/>
            <person name="Zhang L."/>
            <person name="Ramsey A.J."/>
            <person name="Jorns M.S."/>
        </authorList>
    </citation>
    <scope>FUNCTION</scope>
    <scope>CATALYTIC ACTIVITY</scope>
    <scope>SUBUNIT</scope>
    <scope>SUBCELLULAR LOCATION</scope>
    <source>
        <strain>P-1</strain>
    </source>
</reference>
<reference key="4">
    <citation type="journal article" date="1997" name="Arch. Biochem. Biophys.">
        <title>Folate utilization by monomeric versus heterotetrameric sarcosine oxidases.</title>
        <authorList>
            <person name="Wagner M.A."/>
            <person name="Schuman Jorns M."/>
        </authorList>
    </citation>
    <scope>FUNCTION</scope>
    <scope>CATALYTIC ACTIVITY</scope>
    <source>
        <strain>P-1</strain>
    </source>
</reference>
<reference key="5">
    <citation type="journal article" date="2001" name="Biochemistry">
        <title>Organization of the multiple coenzymes and subunits and role of the covalent flavin link in the complex heterotetrameric sarcosine oxidase.</title>
        <authorList>
            <person name="Eschenbrenner M."/>
            <person name="Chlumsky L.J."/>
            <person name="Khanna P."/>
            <person name="Strasser F."/>
            <person name="Jorns M.S."/>
        </authorList>
    </citation>
    <scope>FUNCTION</scope>
    <scope>CATALYTIC ACTIVITY</scope>
    <scope>SUBUNIT</scope>
    <source>
        <strain>P-1</strain>
    </source>
</reference>
<keyword id="KW-0963">Cytoplasm</keyword>
<keyword id="KW-0903">Direct protein sequencing</keyword>
<keyword id="KW-0479">Metal-binding</keyword>
<keyword id="KW-0560">Oxidoreductase</keyword>
<keyword id="KW-0862">Zinc</keyword>
<gene>
    <name evidence="7" type="primary">soxD</name>
</gene>